<keyword id="KW-0175">Coiled coil</keyword>
<keyword id="KW-1267">Proteomics identification</keyword>
<keyword id="KW-1185">Reference proteome</keyword>
<gene>
    <name type="primary">GOLGA6B</name>
    <name type="synonym">GOLGA</name>
</gene>
<accession>A6NDN3</accession>
<accession>A8MYY7</accession>
<protein>
    <recommendedName>
        <fullName>Golgin subfamily A member 6B</fullName>
    </recommendedName>
</protein>
<comment type="similarity">
    <text evidence="3">Belongs to the GOLGA6 family.</text>
</comment>
<comment type="caution">
    <text evidence="3">Maps to a duplicated region on chromosome 15; the gene is present in at least 4 almost identical copies.</text>
</comment>
<evidence type="ECO:0000255" key="1"/>
<evidence type="ECO:0000256" key="2">
    <source>
        <dbReference type="SAM" id="MobiDB-lite"/>
    </source>
</evidence>
<evidence type="ECO:0000305" key="3"/>
<proteinExistence type="evidence at protein level"/>
<sequence length="693" mass="79913">MWPQPYLPPHPMMLEESRQNKLAAAKKKLKEYQQRKSPGIPAGAKTKKKKTDSSPETTTSGGGHSPGDSQYQELAVALESSSVTISQLNENIESLKQQKKQVEHQLEEAKKTNNEIHKAQMERLETINILTLEKADLKTTLYHTKRAARHFEEESKDLAGRLQYSLQRIQELERALCAVSTQQQEEDRSSSCREAVLHRRLQQTIKERALLNAHVTQVTESLKQVQLERDEYAKHIKGERARWQERMWKMSVEARTLKEEKKRDIHRIQELERSLSELKNQMAKPPSLAPPAVTSVVEQLQDEAKHLRQEVEGLEGKLQSQVENNQALSLLSKEQKQRLQEQEEMLREQEVQRVREQERLCEQNERLREQQKTLQEQGERLRKQEQRLRKQEERLRKEEERLQKQEKRLWDQEERLWKKEERLQKQEERLALSQNHKLDKQLAEPQCSFEDLNNEKKSALQLEQQVKELQEKLDEEHLEAASQQNQQLETQLSLVALPGEGDGGQHLDSEEEEAPRPTPNIPEDLESREATSSFMDLPKEKADGTEQVERRELGFVQPSGVTDGMRESFTVYESQGAVPNTRHQEMEDVIRLAQKEEEMKVKLLELQELVLPLVGNHEGHGKFLIAAQNPADEPTPGAPAPQELGAAGEQDDFYEVSLDNNVEPAPGAAREGSPHDNPTVQQIVQLSPVMQDT</sequence>
<organism>
    <name type="scientific">Homo sapiens</name>
    <name type="common">Human</name>
    <dbReference type="NCBI Taxonomy" id="9606"/>
    <lineage>
        <taxon>Eukaryota</taxon>
        <taxon>Metazoa</taxon>
        <taxon>Chordata</taxon>
        <taxon>Craniata</taxon>
        <taxon>Vertebrata</taxon>
        <taxon>Euteleostomi</taxon>
        <taxon>Mammalia</taxon>
        <taxon>Eutheria</taxon>
        <taxon>Euarchontoglires</taxon>
        <taxon>Primates</taxon>
        <taxon>Haplorrhini</taxon>
        <taxon>Catarrhini</taxon>
        <taxon>Hominidae</taxon>
        <taxon>Homo</taxon>
    </lineage>
</organism>
<name>GOG6B_HUMAN</name>
<reference key="1">
    <citation type="journal article" date="2006" name="Nature">
        <title>Analysis of the DNA sequence and duplication history of human chromosome 15.</title>
        <authorList>
            <person name="Zody M.C."/>
            <person name="Garber M."/>
            <person name="Sharpe T."/>
            <person name="Young S.K."/>
            <person name="Rowen L."/>
            <person name="O'Neill K."/>
            <person name="Whittaker C.A."/>
            <person name="Kamal M."/>
            <person name="Chang J.L."/>
            <person name="Cuomo C.A."/>
            <person name="Dewar K."/>
            <person name="FitzGerald M.G."/>
            <person name="Kodira C.D."/>
            <person name="Madan A."/>
            <person name="Qin S."/>
            <person name="Yang X."/>
            <person name="Abbasi N."/>
            <person name="Abouelleil A."/>
            <person name="Arachchi H.M."/>
            <person name="Baradarani L."/>
            <person name="Birditt B."/>
            <person name="Bloom S."/>
            <person name="Bloom T."/>
            <person name="Borowsky M.L."/>
            <person name="Burke J."/>
            <person name="Butler J."/>
            <person name="Cook A."/>
            <person name="DeArellano K."/>
            <person name="DeCaprio D."/>
            <person name="Dorris L. III"/>
            <person name="Dors M."/>
            <person name="Eichler E.E."/>
            <person name="Engels R."/>
            <person name="Fahey J."/>
            <person name="Fleetwood P."/>
            <person name="Friedman C."/>
            <person name="Gearin G."/>
            <person name="Hall J.L."/>
            <person name="Hensley G."/>
            <person name="Johnson E."/>
            <person name="Jones C."/>
            <person name="Kamat A."/>
            <person name="Kaur A."/>
            <person name="Locke D.P."/>
            <person name="Madan A."/>
            <person name="Munson G."/>
            <person name="Jaffe D.B."/>
            <person name="Lui A."/>
            <person name="Macdonald P."/>
            <person name="Mauceli E."/>
            <person name="Naylor J.W."/>
            <person name="Nesbitt R."/>
            <person name="Nicol R."/>
            <person name="O'Leary S.B."/>
            <person name="Ratcliffe A."/>
            <person name="Rounsley S."/>
            <person name="She X."/>
            <person name="Sneddon K.M.B."/>
            <person name="Stewart S."/>
            <person name="Sougnez C."/>
            <person name="Stone S.M."/>
            <person name="Topham K."/>
            <person name="Vincent D."/>
            <person name="Wang S."/>
            <person name="Zimmer A.R."/>
            <person name="Birren B.W."/>
            <person name="Hood L."/>
            <person name="Lander E.S."/>
            <person name="Nusbaum C."/>
        </authorList>
    </citation>
    <scope>NUCLEOTIDE SEQUENCE [LARGE SCALE GENOMIC DNA]</scope>
</reference>
<dbReference type="EMBL" id="AC009712">
    <property type="status" value="NOT_ANNOTATED_CDS"/>
    <property type="molecule type" value="Genomic_DNA"/>
</dbReference>
<dbReference type="EMBL" id="AC100827">
    <property type="status" value="NOT_ANNOTATED_CDS"/>
    <property type="molecule type" value="Genomic_DNA"/>
</dbReference>
<dbReference type="CCDS" id="CCDS10245.2"/>
<dbReference type="RefSeq" id="NP_061122.4">
    <property type="nucleotide sequence ID" value="NM_018652.4"/>
</dbReference>
<dbReference type="SMR" id="A6NDN3"/>
<dbReference type="BioGRID" id="120979">
    <property type="interactions" value="3"/>
</dbReference>
<dbReference type="FunCoup" id="A6NDN3">
    <property type="interactions" value="18"/>
</dbReference>
<dbReference type="IntAct" id="A6NDN3">
    <property type="interactions" value="1"/>
</dbReference>
<dbReference type="STRING" id="9606.ENSP00000408132"/>
<dbReference type="GlyGen" id="A6NDN3">
    <property type="glycosylation" value="1 site"/>
</dbReference>
<dbReference type="iPTMnet" id="A6NDN3"/>
<dbReference type="PhosphoSitePlus" id="A6NDN3"/>
<dbReference type="BioMuta" id="GOLGA6B"/>
<dbReference type="jPOST" id="A6NDN3"/>
<dbReference type="MassIVE" id="A6NDN3"/>
<dbReference type="PaxDb" id="9606-ENSP00000408132"/>
<dbReference type="PeptideAtlas" id="A6NDN3"/>
<dbReference type="ProteomicsDB" id="919"/>
<dbReference type="Antibodypedia" id="43026">
    <property type="antibodies" value="86 antibodies from 22 providers"/>
</dbReference>
<dbReference type="DNASU" id="55889"/>
<dbReference type="Ensembl" id="ENST00000421285.4">
    <property type="protein sequence ID" value="ENSP00000408132.3"/>
    <property type="gene ID" value="ENSG00000215186.7"/>
</dbReference>
<dbReference type="GeneID" id="55889"/>
<dbReference type="KEGG" id="hsa:55889"/>
<dbReference type="MANE-Select" id="ENST00000421285.4">
    <property type="protein sequence ID" value="ENSP00000408132.3"/>
    <property type="RefSeq nucleotide sequence ID" value="NM_018652.5"/>
    <property type="RefSeq protein sequence ID" value="NP_061122.4"/>
</dbReference>
<dbReference type="UCSC" id="uc010uks.2">
    <property type="organism name" value="human"/>
</dbReference>
<dbReference type="AGR" id="HGNC:32205"/>
<dbReference type="CTD" id="55889"/>
<dbReference type="GeneCards" id="GOLGA6B"/>
<dbReference type="HGNC" id="HGNC:32205">
    <property type="gene designation" value="GOLGA6B"/>
</dbReference>
<dbReference type="HPA" id="ENSG00000215186">
    <property type="expression patterns" value="Group enriched (liver, testis)"/>
</dbReference>
<dbReference type="neXtProt" id="NX_A6NDN3"/>
<dbReference type="OpenTargets" id="ENSG00000215186"/>
<dbReference type="PharmGKB" id="PA162389878"/>
<dbReference type="VEuPathDB" id="HostDB:ENSG00000215186"/>
<dbReference type="eggNOG" id="KOG4725">
    <property type="taxonomic scope" value="Eukaryota"/>
</dbReference>
<dbReference type="GeneTree" id="ENSGT00530000062932"/>
<dbReference type="HOGENOM" id="CLU_012403_1_2_1"/>
<dbReference type="InParanoid" id="A6NDN3"/>
<dbReference type="OMA" id="AHEQDFY"/>
<dbReference type="OrthoDB" id="9538952at2759"/>
<dbReference type="PAN-GO" id="A6NDN3">
    <property type="GO annotations" value="4 GO annotations based on evolutionary models"/>
</dbReference>
<dbReference type="PhylomeDB" id="A6NDN3"/>
<dbReference type="TreeFam" id="TF316990"/>
<dbReference type="PathwayCommons" id="A6NDN3"/>
<dbReference type="SignaLink" id="A6NDN3"/>
<dbReference type="BioGRID-ORCS" id="55889">
    <property type="hits" value="75 hits in 976 CRISPR screens"/>
</dbReference>
<dbReference type="GenomeRNAi" id="55889"/>
<dbReference type="Pharos" id="A6NDN3">
    <property type="development level" value="Tdark"/>
</dbReference>
<dbReference type="PRO" id="PR:A6NDN3"/>
<dbReference type="Proteomes" id="UP000005640">
    <property type="component" value="Chromosome 15"/>
</dbReference>
<dbReference type="RNAct" id="A6NDN3">
    <property type="molecule type" value="protein"/>
</dbReference>
<dbReference type="Bgee" id="ENSG00000215186">
    <property type="expression patterns" value="Expressed in male germ line stem cell (sensu Vertebrata) in testis and 69 other cell types or tissues"/>
</dbReference>
<dbReference type="GO" id="GO:0005801">
    <property type="term" value="C:cis-Golgi network"/>
    <property type="evidence" value="ECO:0000318"/>
    <property type="project" value="GO_Central"/>
</dbReference>
<dbReference type="GO" id="GO:0000137">
    <property type="term" value="C:Golgi cis cisterna"/>
    <property type="evidence" value="ECO:0000318"/>
    <property type="project" value="GO_Central"/>
</dbReference>
<dbReference type="GO" id="GO:0032580">
    <property type="term" value="C:Golgi cisterna membrane"/>
    <property type="evidence" value="ECO:0000318"/>
    <property type="project" value="GO_Central"/>
</dbReference>
<dbReference type="GO" id="GO:0007030">
    <property type="term" value="P:Golgi organization"/>
    <property type="evidence" value="ECO:0000318"/>
    <property type="project" value="GO_Central"/>
</dbReference>
<dbReference type="InterPro" id="IPR043976">
    <property type="entry name" value="GOLGA_cons_dom"/>
</dbReference>
<dbReference type="InterPro" id="IPR024858">
    <property type="entry name" value="Golgin_A"/>
</dbReference>
<dbReference type="PANTHER" id="PTHR10881:SF44">
    <property type="entry name" value="GOLGIN SUBFAMILY A MEMBER 6A-RELATED"/>
    <property type="match status" value="1"/>
</dbReference>
<dbReference type="PANTHER" id="PTHR10881">
    <property type="entry name" value="GOLGIN SUBFAMILY A MEMBER-RELATED"/>
    <property type="match status" value="1"/>
</dbReference>
<dbReference type="Pfam" id="PF15070">
    <property type="entry name" value="GOLGA2L5"/>
    <property type="match status" value="3"/>
</dbReference>
<feature type="chain" id="PRO_0000332248" description="Golgin subfamily A member 6B">
    <location>
        <begin position="1"/>
        <end position="693"/>
    </location>
</feature>
<feature type="region of interest" description="Disordered" evidence="2">
    <location>
        <begin position="1"/>
        <end position="72"/>
    </location>
</feature>
<feature type="region of interest" description="Disordered" evidence="2">
    <location>
        <begin position="497"/>
        <end position="551"/>
    </location>
</feature>
<feature type="region of interest" description="Disordered" evidence="2">
    <location>
        <begin position="629"/>
        <end position="650"/>
    </location>
</feature>
<feature type="region of interest" description="Disordered" evidence="2">
    <location>
        <begin position="660"/>
        <end position="679"/>
    </location>
</feature>
<feature type="coiled-coil region" evidence="1">
    <location>
        <begin position="77"/>
        <end position="611"/>
    </location>
</feature>
<feature type="compositionally biased region" description="Pro residues" evidence="2">
    <location>
        <begin position="1"/>
        <end position="11"/>
    </location>
</feature>
<feature type="compositionally biased region" description="Basic and acidic residues" evidence="2">
    <location>
        <begin position="537"/>
        <end position="551"/>
    </location>
</feature>
<feature type="sequence variant" id="VAR_042994" description="In dbSNP:rs2081561.">
    <original>R</original>
    <variation>W</variation>
    <location>
        <position position="200"/>
    </location>
</feature>